<sequence>MSGALDVLQMKEEDVLKFLAAGTHLGGTNLDFQMEQYIYKRKSDGIYIINLKRTWEKLLLAARAIVAIENPADVSVISSRNTGQRAVLKFAAATGATPIAGRFTPGTFTNQIQAAFREPRLLVVTDPRADHQPLTEASYVNLPTIALCNTDSPLRYVDIAIPCNNKGAHSVGLMWWMLAREVLRMRGTISREHPWEVMPDLYFYRDPEEIEKEEQAAAEKAVTKEEFQGEWTAPAPEFTAAQPEVADWSEGVQVPSVPIQQFPTEDWSAQPSTEDWSAAPTAQATEWVGTTTEWS</sequence>
<reference key="1">
    <citation type="journal article" date="1991" name="Biochemistry">
        <title>Characterization of a putative clone for the 67-kilodalton elastin/laminin receptor suggests that it encodes a cytoplasmic protein rather than a cell surface receptor.</title>
        <authorList>
            <person name="Grosso L.E."/>
            <person name="Park P.W."/>
            <person name="Mecham R.P."/>
        </authorList>
    </citation>
    <scope>NUCLEOTIDE SEQUENCE [MRNA]</scope>
    <scope>SUBCELLULAR LOCATION</scope>
    <source>
        <tissue>Nuchal ligament</tissue>
    </source>
</reference>
<reference key="2">
    <citation type="submission" date="2005-08" db="EMBL/GenBank/DDBJ databases">
        <authorList>
            <consortium name="NIH - Mammalian Gene Collection (MGC) project"/>
        </authorList>
    </citation>
    <scope>NUCLEOTIDE SEQUENCE [LARGE SCALE MRNA]</scope>
    <source>
        <strain>Crossbred X Angus</strain>
        <tissue>Ileum</tissue>
    </source>
</reference>
<gene>
    <name evidence="3" type="primary">RPSA</name>
    <name type="synonym">LAMR1</name>
</gene>
<dbReference type="EMBL" id="M64923">
    <property type="protein sequence ID" value="AAA62713.1"/>
    <property type="molecule type" value="mRNA"/>
</dbReference>
<dbReference type="EMBL" id="BC102490">
    <property type="protein sequence ID" value="AAI02491.1"/>
    <property type="molecule type" value="mRNA"/>
</dbReference>
<dbReference type="PIR" id="A38464">
    <property type="entry name" value="A38464"/>
</dbReference>
<dbReference type="RefSeq" id="NP_776804.1">
    <property type="nucleotide sequence ID" value="NM_174379.2"/>
</dbReference>
<dbReference type="RefSeq" id="XP_005222426.1">
    <property type="nucleotide sequence ID" value="XM_005222369.5"/>
</dbReference>
<dbReference type="RefSeq" id="XP_005222427.1">
    <property type="nucleotide sequence ID" value="XM_005222370.3"/>
</dbReference>
<dbReference type="SMR" id="P26452"/>
<dbReference type="FunCoup" id="P26452">
    <property type="interactions" value="2397"/>
</dbReference>
<dbReference type="STRING" id="9913.ENSBTAP00000072944"/>
<dbReference type="PaxDb" id="9913-ENSBTAP00000012866"/>
<dbReference type="PeptideAtlas" id="P26452"/>
<dbReference type="Ensembl" id="ENSBTAT00000012866.5">
    <property type="protein sequence ID" value="ENSBTAP00000012866.3"/>
    <property type="gene ID" value="ENSBTAG00000009757.7"/>
</dbReference>
<dbReference type="GeneID" id="281898"/>
<dbReference type="KEGG" id="bta:281898"/>
<dbReference type="CTD" id="3921"/>
<dbReference type="VEuPathDB" id="HostDB:ENSBTAG00000009757"/>
<dbReference type="VGNC" id="VGNC:50207">
    <property type="gene designation" value="RPSA"/>
</dbReference>
<dbReference type="eggNOG" id="KOG0830">
    <property type="taxonomic scope" value="Eukaryota"/>
</dbReference>
<dbReference type="GeneTree" id="ENSGT00950000183099"/>
<dbReference type="HOGENOM" id="CLU_058171_1_0_1"/>
<dbReference type="InParanoid" id="P26452"/>
<dbReference type="OrthoDB" id="9928405at2759"/>
<dbReference type="TreeFam" id="TF300100"/>
<dbReference type="Reactome" id="R-BTA-156827">
    <property type="pathway name" value="L13a-mediated translational silencing of Ceruloplasmin expression"/>
</dbReference>
<dbReference type="Reactome" id="R-BTA-1799339">
    <property type="pathway name" value="SRP-dependent cotranslational protein targeting to membrane"/>
</dbReference>
<dbReference type="Reactome" id="R-BTA-6791226">
    <property type="pathway name" value="Major pathway of rRNA processing in the nucleolus and cytosol"/>
</dbReference>
<dbReference type="Reactome" id="R-BTA-72649">
    <property type="pathway name" value="Translation initiation complex formation"/>
</dbReference>
<dbReference type="Reactome" id="R-BTA-72689">
    <property type="pathway name" value="Formation of a pool of free 40S subunits"/>
</dbReference>
<dbReference type="Reactome" id="R-BTA-72695">
    <property type="pathway name" value="Formation of the ternary complex, and subsequently, the 43S complex"/>
</dbReference>
<dbReference type="Reactome" id="R-BTA-72702">
    <property type="pathway name" value="Ribosomal scanning and start codon recognition"/>
</dbReference>
<dbReference type="Reactome" id="R-BTA-72706">
    <property type="pathway name" value="GTP hydrolysis and joining of the 60S ribosomal subunit"/>
</dbReference>
<dbReference type="Reactome" id="R-BTA-975956">
    <property type="pathway name" value="Nonsense Mediated Decay (NMD) independent of the Exon Junction Complex (EJC)"/>
</dbReference>
<dbReference type="Reactome" id="R-BTA-975957">
    <property type="pathway name" value="Nonsense Mediated Decay (NMD) enhanced by the Exon Junction Complex (EJC)"/>
</dbReference>
<dbReference type="Proteomes" id="UP000009136">
    <property type="component" value="Chromosome 22"/>
</dbReference>
<dbReference type="Bgee" id="ENSBTAG00000009757">
    <property type="expression patterns" value="Expressed in digestive system secreted substance and 106 other cell types or tissues"/>
</dbReference>
<dbReference type="GO" id="GO:0005737">
    <property type="term" value="C:cytoplasm"/>
    <property type="evidence" value="ECO:0000250"/>
    <property type="project" value="UniProtKB"/>
</dbReference>
<dbReference type="GO" id="GO:0022627">
    <property type="term" value="C:cytosolic small ribosomal subunit"/>
    <property type="evidence" value="ECO:0000318"/>
    <property type="project" value="GO_Central"/>
</dbReference>
<dbReference type="GO" id="GO:0016020">
    <property type="term" value="C:membrane"/>
    <property type="evidence" value="ECO:0000314"/>
    <property type="project" value="MGI"/>
</dbReference>
<dbReference type="GO" id="GO:0005634">
    <property type="term" value="C:nucleus"/>
    <property type="evidence" value="ECO:0007669"/>
    <property type="project" value="UniProtKB-SubCell"/>
</dbReference>
<dbReference type="GO" id="GO:0005886">
    <property type="term" value="C:plasma membrane"/>
    <property type="evidence" value="ECO:0000250"/>
    <property type="project" value="UniProtKB"/>
</dbReference>
<dbReference type="GO" id="GO:0043236">
    <property type="term" value="F:laminin binding"/>
    <property type="evidence" value="ECO:0000250"/>
    <property type="project" value="UniProtKB"/>
</dbReference>
<dbReference type="GO" id="GO:0005055">
    <property type="term" value="F:laminin receptor activity"/>
    <property type="evidence" value="ECO:0007669"/>
    <property type="project" value="UniProtKB-UniRule"/>
</dbReference>
<dbReference type="GO" id="GO:0003735">
    <property type="term" value="F:structural constituent of ribosome"/>
    <property type="evidence" value="ECO:0000318"/>
    <property type="project" value="GO_Central"/>
</dbReference>
<dbReference type="GO" id="GO:0002181">
    <property type="term" value="P:cytoplasmic translation"/>
    <property type="evidence" value="ECO:0000318"/>
    <property type="project" value="GO_Central"/>
</dbReference>
<dbReference type="GO" id="GO:0000028">
    <property type="term" value="P:ribosomal small subunit assembly"/>
    <property type="evidence" value="ECO:0000318"/>
    <property type="project" value="GO_Central"/>
</dbReference>
<dbReference type="CDD" id="cd01425">
    <property type="entry name" value="RPS2"/>
    <property type="match status" value="1"/>
</dbReference>
<dbReference type="FunFam" id="3.40.50.10490:FF:000012">
    <property type="entry name" value="40S ribosomal protein SA"/>
    <property type="match status" value="1"/>
</dbReference>
<dbReference type="Gene3D" id="3.40.50.10490">
    <property type="entry name" value="Glucose-6-phosphate isomerase like protein, domain 1"/>
    <property type="match status" value="1"/>
</dbReference>
<dbReference type="HAMAP" id="MF_03015">
    <property type="entry name" value="Ribosomal_S2_euk"/>
    <property type="match status" value="1"/>
</dbReference>
<dbReference type="HAMAP" id="MF_03016">
    <property type="entry name" value="Ribosomal_S2_laminin_receptor"/>
    <property type="match status" value="1"/>
</dbReference>
<dbReference type="InterPro" id="IPR001865">
    <property type="entry name" value="Ribosomal_uS2"/>
</dbReference>
<dbReference type="InterPro" id="IPR032281">
    <property type="entry name" value="Ribosomal_uS2_C"/>
</dbReference>
<dbReference type="InterPro" id="IPR018130">
    <property type="entry name" value="Ribosomal_uS2_CS"/>
</dbReference>
<dbReference type="InterPro" id="IPR027498">
    <property type="entry name" value="Ribosomal_uS2_euk"/>
</dbReference>
<dbReference type="InterPro" id="IPR005707">
    <property type="entry name" value="Ribosomal_uS2_euk/arc"/>
</dbReference>
<dbReference type="InterPro" id="IPR023591">
    <property type="entry name" value="Ribosomal_uS2_flav_dom_sf"/>
</dbReference>
<dbReference type="InterPro" id="IPR027504">
    <property type="entry name" value="Ribosomal_uS2_vert"/>
</dbReference>
<dbReference type="NCBIfam" id="TIGR01012">
    <property type="entry name" value="uS2_euk_arch"/>
    <property type="match status" value="1"/>
</dbReference>
<dbReference type="PANTHER" id="PTHR11489">
    <property type="entry name" value="40S RIBOSOMAL PROTEIN SA"/>
    <property type="match status" value="1"/>
</dbReference>
<dbReference type="Pfam" id="PF16122">
    <property type="entry name" value="40S_SA_C"/>
    <property type="match status" value="1"/>
</dbReference>
<dbReference type="Pfam" id="PF00318">
    <property type="entry name" value="Ribosomal_S2"/>
    <property type="match status" value="2"/>
</dbReference>
<dbReference type="PRINTS" id="PR00395">
    <property type="entry name" value="RIBOSOMALS2"/>
</dbReference>
<dbReference type="SUPFAM" id="SSF52313">
    <property type="entry name" value="Ribosomal protein S2"/>
    <property type="match status" value="1"/>
</dbReference>
<dbReference type="PROSITE" id="PS00962">
    <property type="entry name" value="RIBOSOMAL_S2_1"/>
    <property type="match status" value="1"/>
</dbReference>
<dbReference type="PROSITE" id="PS00963">
    <property type="entry name" value="RIBOSOMAL_S2_2"/>
    <property type="match status" value="1"/>
</dbReference>
<evidence type="ECO:0000250" key="1">
    <source>
        <dbReference type="UniProtKB" id="P08865"/>
    </source>
</evidence>
<evidence type="ECO:0000250" key="2">
    <source>
        <dbReference type="UniProtKB" id="P14206"/>
    </source>
</evidence>
<evidence type="ECO:0000255" key="3">
    <source>
        <dbReference type="HAMAP-Rule" id="MF_03016"/>
    </source>
</evidence>
<evidence type="ECO:0000256" key="4">
    <source>
        <dbReference type="SAM" id="MobiDB-lite"/>
    </source>
</evidence>
<evidence type="ECO:0000269" key="5">
    <source>
    </source>
</evidence>
<evidence type="ECO:0000305" key="6"/>
<accession>P26452</accession>
<accession>Q3ZCE4</accession>
<keyword id="KW-0007">Acetylation</keyword>
<keyword id="KW-1003">Cell membrane</keyword>
<keyword id="KW-0963">Cytoplasm</keyword>
<keyword id="KW-1017">Isopeptide bond</keyword>
<keyword id="KW-0472">Membrane</keyword>
<keyword id="KW-0539">Nucleus</keyword>
<keyword id="KW-0597">Phosphoprotein</keyword>
<keyword id="KW-0675">Receptor</keyword>
<keyword id="KW-1185">Reference proteome</keyword>
<keyword id="KW-0677">Repeat</keyword>
<keyword id="KW-0687">Ribonucleoprotein</keyword>
<keyword id="KW-0689">Ribosomal protein</keyword>
<keyword id="KW-0832">Ubl conjugation</keyword>
<feature type="initiator methionine" description="Removed" evidence="3">
    <location>
        <position position="1"/>
    </location>
</feature>
<feature type="chain" id="PRO_0000134356" description="Small ribosomal subunit protein uS2">
    <location>
        <begin position="2"/>
        <end position="295"/>
    </location>
</feature>
<feature type="repeat" description="[DE]-W-[ST] 1">
    <location>
        <begin position="230"/>
        <end position="232"/>
    </location>
</feature>
<feature type="repeat" description="[DE]-W-[ST] 2">
    <location>
        <begin position="247"/>
        <end position="249"/>
    </location>
</feature>
<feature type="repeat" description="[DE]-W-[ST] 3">
    <location>
        <begin position="266"/>
        <end position="268"/>
    </location>
</feature>
<feature type="repeat" description="[DE]-W-[ST] 4">
    <location>
        <begin position="275"/>
        <end position="277"/>
    </location>
</feature>
<feature type="repeat" description="[DE]-W-[ST] 5">
    <location>
        <begin position="293"/>
        <end position="295"/>
    </location>
</feature>
<feature type="region of interest" description="Interaction with PPP1R16B" evidence="3">
    <location>
        <begin position="54"/>
        <end position="113"/>
    </location>
</feature>
<feature type="region of interest" description="Laminin-binding" evidence="3">
    <location>
        <begin position="161"/>
        <end position="180"/>
    </location>
</feature>
<feature type="region of interest" description="Laminin-binding" evidence="3">
    <location>
        <begin position="205"/>
        <end position="229"/>
    </location>
</feature>
<feature type="region of interest" description="Laminin-binding" evidence="3">
    <location>
        <begin position="242"/>
        <end position="295"/>
    </location>
</feature>
<feature type="region of interest" description="Disordered" evidence="4">
    <location>
        <begin position="266"/>
        <end position="295"/>
    </location>
</feature>
<feature type="site" description="Cleavage; by ST3; site 1" evidence="3">
    <location>
        <begin position="115"/>
        <end position="116"/>
    </location>
</feature>
<feature type="site" description="Cleavage; by ST3; site 2" evidence="3">
    <location>
        <begin position="133"/>
        <end position="134"/>
    </location>
</feature>
<feature type="modified residue" description="N-acetylserine" evidence="1 3">
    <location>
        <position position="2"/>
    </location>
</feature>
<feature type="modified residue" description="Phosphoserine" evidence="1">
    <location>
        <position position="43"/>
    </location>
</feature>
<feature type="modified residue" description="N6-acetyllysine" evidence="1">
    <location>
        <position position="52"/>
    </location>
</feature>
<feature type="modified residue" description="N6-acetyllysine; alternate" evidence="2">
    <location>
        <position position="89"/>
    </location>
</feature>
<feature type="modified residue" description="Phosphothreonine" evidence="1">
    <location>
        <position position="97"/>
    </location>
</feature>
<feature type="cross-link" description="Glycyl lysine isopeptide (Lys-Gly) (interchain with G-Cter in SUMO2); alternate" evidence="1">
    <location>
        <position position="89"/>
    </location>
</feature>
<feature type="sequence conflict" description="In Ref. 1; AAA62713." evidence="6" ref="1">
    <original>T</original>
    <variation>N</variation>
    <location>
        <position position="107"/>
    </location>
</feature>
<organism>
    <name type="scientific">Bos taurus</name>
    <name type="common">Bovine</name>
    <dbReference type="NCBI Taxonomy" id="9913"/>
    <lineage>
        <taxon>Eukaryota</taxon>
        <taxon>Metazoa</taxon>
        <taxon>Chordata</taxon>
        <taxon>Craniata</taxon>
        <taxon>Vertebrata</taxon>
        <taxon>Euteleostomi</taxon>
        <taxon>Mammalia</taxon>
        <taxon>Eutheria</taxon>
        <taxon>Laurasiatheria</taxon>
        <taxon>Artiodactyla</taxon>
        <taxon>Ruminantia</taxon>
        <taxon>Pecora</taxon>
        <taxon>Bovidae</taxon>
        <taxon>Bovinae</taxon>
        <taxon>Bos</taxon>
    </lineage>
</organism>
<protein>
    <recommendedName>
        <fullName evidence="3">Small ribosomal subunit protein uS2</fullName>
    </recommendedName>
    <alternativeName>
        <fullName evidence="3">37 kDa laminin receptor precursor</fullName>
        <shortName evidence="3">37LRP</shortName>
    </alternativeName>
    <alternativeName>
        <fullName evidence="3">37/67 kDa laminin receptor</fullName>
        <shortName evidence="3">LRP/LR</shortName>
    </alternativeName>
    <alternativeName>
        <fullName evidence="6">40S ribosomal protein SA</fullName>
    </alternativeName>
    <alternativeName>
        <fullName evidence="3">67 kDa laminin receptor</fullName>
        <shortName evidence="3">67LR</shortName>
    </alternativeName>
    <alternativeName>
        <fullName evidence="3">Laminin receptor 1</fullName>
        <shortName evidence="3">LamR</shortName>
    </alternativeName>
    <alternativeName>
        <fullName evidence="3">Laminin-binding protein precursor p40</fullName>
        <shortName evidence="3">LBP/p40</shortName>
    </alternativeName>
    <alternativeName>
        <fullName>Protein C10</fullName>
    </alternativeName>
</protein>
<proteinExistence type="evidence at transcript level"/>
<name>RSSA_BOVIN</name>
<comment type="function">
    <text evidence="3">Required for the assembly and/or stability of the 40S ribosomal subunit. Required for the processing of the 20S rRNA-precursor to mature 18S rRNA in a late step of the maturation of 40S ribosomal subunits. Also functions as a cell surface receptor for laminin. Plays a role in cell adhesion to the basement membrane and in the consequent activation of signaling transduction pathways. May play a role in cell fate determination and tissue morphogenesis. Also acts as a receptor for several other ligands, including the pathogenic prion protein, viruses, and bacteria. Acts as a PPP1R16B-dependent substrate of PPP1CA.</text>
</comment>
<comment type="subunit">
    <text evidence="3">Monomer (37LRP) and homodimer (67LR). Component of the small ribosomal subunit. Mature ribosomes consist of a small (40S) and a large (60S) subunit. The 40S subunit contains about 33 different proteins and 1 molecule of RNA (18S). The 60S subunit contains about 49 different proteins and 3 molecules of RNA (28S, 5.8S and 5S). Interacts with RPS21. Interacts with several laminins including at least LAMB1. Interacts with MDK. The mature dimeric form interacts with PPP1R16B (via its fourth ankyrin repeat). Interacts with PPP1CA only in the presence of PPP1R16B.</text>
</comment>
<comment type="subcellular location">
    <subcellularLocation>
        <location evidence="3">Cell membrane</location>
    </subcellularLocation>
    <subcellularLocation>
        <location evidence="3 5">Cytoplasm</location>
    </subcellularLocation>
    <subcellularLocation>
        <location evidence="3">Nucleus</location>
    </subcellularLocation>
    <text evidence="3">67LR is found at the surface of the plasma membrane, with its C-terminal laminin-binding domain accessible to extracellular ligands. 37LRP is found at the cell surface, in the cytoplasm and in the nucleus. Colocalizes with PPP1R16B in the cell membrane (By similarity).</text>
</comment>
<comment type="PTM">
    <text evidence="3">Acylated. Acylation may be a prerequisite for conversion of the monomeric 37 kDa laminin receptor precursor (37LRP) to the mature dimeric 67 kDa laminin receptor (67LR), and may provide a mechanism for membrane association.</text>
</comment>
<comment type="PTM">
    <text evidence="3">Cleaved by stromelysin-3 (ST3) at the cell surface. Cleavage by stromelysin-3 may be a mechanism to alter cell-extracellular matrix interactions.</text>
</comment>
<comment type="miscellaneous">
    <text>This protein appears to have acquired a second function as a laminin receptor specifically in the vertebrate lineage.</text>
</comment>
<comment type="miscellaneous">
    <text>It is thought that in vertebrates 37/67 kDa laminin receptor acquired a dual function during evolution. It developed from the ribosomal protein SA, playing an essential role in the protein biosynthesis lacking any laminin binding activity, to a cell surface receptor with laminin binding activity.</text>
</comment>
<comment type="similarity">
    <text evidence="3">Belongs to the universal ribosomal protein uS2 family.</text>
</comment>